<dbReference type="EMBL" id="BA000028">
    <property type="protein sequence ID" value="BAC12862.1"/>
    <property type="molecule type" value="Genomic_DNA"/>
</dbReference>
<dbReference type="RefSeq" id="WP_011065312.1">
    <property type="nucleotide sequence ID" value="NC_004193.1"/>
</dbReference>
<dbReference type="SMR" id="Q8CV51"/>
<dbReference type="STRING" id="221109.gene:10733127"/>
<dbReference type="KEGG" id="oih:OB0906"/>
<dbReference type="eggNOG" id="ENOG50313Y4">
    <property type="taxonomic scope" value="Bacteria"/>
</dbReference>
<dbReference type="HOGENOM" id="CLU_143991_0_0_9"/>
<dbReference type="OrthoDB" id="1653848at2"/>
<dbReference type="Proteomes" id="UP000000822">
    <property type="component" value="Chromosome"/>
</dbReference>
<dbReference type="GO" id="GO:0005886">
    <property type="term" value="C:plasma membrane"/>
    <property type="evidence" value="ECO:0007669"/>
    <property type="project" value="UniProtKB-SubCell"/>
</dbReference>
<dbReference type="HAMAP" id="MF_01502">
    <property type="entry name" value="UPF0295"/>
    <property type="match status" value="1"/>
</dbReference>
<dbReference type="InterPro" id="IPR020912">
    <property type="entry name" value="UPF0295"/>
</dbReference>
<dbReference type="NCBIfam" id="NF002796">
    <property type="entry name" value="PRK02935.1"/>
    <property type="match status" value="1"/>
</dbReference>
<dbReference type="Pfam" id="PF11023">
    <property type="entry name" value="DUF2614"/>
    <property type="match status" value="1"/>
</dbReference>
<sequence>MSQQLTYSSKINKIRTFALILVFAGIITMYGGILTKNIEWLMVIFFILGTLMVILSCAVYVWIGTLSLRAVPVICPSCEKPTKMLGRVDACMHCKQPLTMDKNLEGIEFDEKYNSRKYKKK</sequence>
<evidence type="ECO:0000255" key="1">
    <source>
        <dbReference type="HAMAP-Rule" id="MF_01502"/>
    </source>
</evidence>
<proteinExistence type="inferred from homology"/>
<organism>
    <name type="scientific">Oceanobacillus iheyensis (strain DSM 14371 / CIP 107618 / JCM 11309 / KCTC 3954 / HTE831)</name>
    <dbReference type="NCBI Taxonomy" id="221109"/>
    <lineage>
        <taxon>Bacteria</taxon>
        <taxon>Bacillati</taxon>
        <taxon>Bacillota</taxon>
        <taxon>Bacilli</taxon>
        <taxon>Bacillales</taxon>
        <taxon>Bacillaceae</taxon>
        <taxon>Oceanobacillus</taxon>
    </lineage>
</organism>
<reference key="1">
    <citation type="journal article" date="2002" name="Nucleic Acids Res.">
        <title>Genome sequence of Oceanobacillus iheyensis isolated from the Iheya Ridge and its unexpected adaptive capabilities to extreme environments.</title>
        <authorList>
            <person name="Takami H."/>
            <person name="Takaki Y."/>
            <person name="Uchiyama I."/>
        </authorList>
    </citation>
    <scope>NUCLEOTIDE SEQUENCE [LARGE SCALE GENOMIC DNA]</scope>
    <source>
        <strain>DSM 14371 / CIP 107618 / JCM 11309 / KCTC 3954 / HTE831</strain>
    </source>
</reference>
<gene>
    <name type="ordered locus">OB0906</name>
</gene>
<accession>Q8CV51</accession>
<comment type="subcellular location">
    <subcellularLocation>
        <location evidence="1">Cell membrane</location>
        <topology evidence="1">Multi-pass membrane protein</topology>
    </subcellularLocation>
</comment>
<comment type="similarity">
    <text evidence="1">Belongs to the UPF0295 family.</text>
</comment>
<keyword id="KW-1003">Cell membrane</keyword>
<keyword id="KW-0472">Membrane</keyword>
<keyword id="KW-1185">Reference proteome</keyword>
<keyword id="KW-0812">Transmembrane</keyword>
<keyword id="KW-1133">Transmembrane helix</keyword>
<name>Y906_OCEIH</name>
<feature type="chain" id="PRO_0000053857" description="UPF0295 protein OB0906">
    <location>
        <begin position="1"/>
        <end position="121"/>
    </location>
</feature>
<feature type="transmembrane region" description="Helical" evidence="1">
    <location>
        <begin position="14"/>
        <end position="34"/>
    </location>
</feature>
<feature type="transmembrane region" description="Helical" evidence="1">
    <location>
        <begin position="43"/>
        <end position="63"/>
    </location>
</feature>
<protein>
    <recommendedName>
        <fullName evidence="1">UPF0295 protein OB0906</fullName>
    </recommendedName>
</protein>